<comment type="function">
    <text evidence="1">Neurotoxin that triggers pain behavior and inflammation in mammals, and is paralytic and lethal to insects. Causes a time-dependent increase in cell leak current. May act by targeting membranes.</text>
</comment>
<comment type="subcellular location">
    <subcellularLocation>
        <location evidence="3">Secreted</location>
    </subcellularLocation>
    <subcellularLocation>
        <location evidence="1">Target cell membrane</location>
    </subcellularLocation>
    <text evidence="1">Adopts helical secondary structure in membrane-mimicking environment.</text>
</comment>
<comment type="tissue specificity">
    <text evidence="7">Expressed by the venom gland.</text>
</comment>
<comment type="PTM">
    <text evidence="1">Glycosylation is critical to maintaining the aqueous solubility of this protein, but does not directly contribute to its activity.</text>
</comment>
<comment type="mass spectrometry" mass="5596.04" method="MALDI" evidence="3"/>
<comment type="miscellaneous">
    <text evidence="4">Very highly expressed in the venom apparatus (5%).</text>
</comment>
<comment type="similarity">
    <text evidence="6">Belongs to the formicidae venom precursor-01 superfamily.</text>
</comment>
<comment type="online information" name="National Center for Biotechnology Information (NCBI)">
    <link uri="https://www.ncbi.nlm.nih.gov/nuccore/GGFG01000010"/>
</comment>
<name>TX17B_MYRGU</name>
<sequence length="100" mass="10174">MKLSCLSLALAIILVLAIVYSPHMEVKALADAEPDAIGFADAFGEADAEPKRRRGLKKIIGKVIKGTGKVAGEAAASAVADAAVSAAIDAVVGTTEEPEQ</sequence>
<dbReference type="GO" id="GO:0005576">
    <property type="term" value="C:extracellular region"/>
    <property type="evidence" value="ECO:0007669"/>
    <property type="project" value="UniProtKB-SubCell"/>
</dbReference>
<dbReference type="InterPro" id="IPR049518">
    <property type="entry name" value="Pilosulin"/>
</dbReference>
<dbReference type="Pfam" id="PF17499">
    <property type="entry name" value="Pilosulin"/>
    <property type="match status" value="1"/>
</dbReference>
<organism>
    <name type="scientific">Myrmecia gulosa</name>
    <name type="common">Red bulldog ant</name>
    <dbReference type="NCBI Taxonomy" id="36170"/>
    <lineage>
        <taxon>Eukaryota</taxon>
        <taxon>Metazoa</taxon>
        <taxon>Ecdysozoa</taxon>
        <taxon>Arthropoda</taxon>
        <taxon>Hexapoda</taxon>
        <taxon>Insecta</taxon>
        <taxon>Pterygota</taxon>
        <taxon>Neoptera</taxon>
        <taxon>Endopterygota</taxon>
        <taxon>Hymenoptera</taxon>
        <taxon>Apocrita</taxon>
        <taxon>Aculeata</taxon>
        <taxon>Formicoidea</taxon>
        <taxon>Formicidae</taxon>
        <taxon>Myrmeciinae</taxon>
        <taxon>Myrmeciini</taxon>
        <taxon>Myrmecia</taxon>
    </lineage>
</organism>
<evidence type="ECO:0000250" key="1">
    <source>
        <dbReference type="UniProtKB" id="P0DSK3"/>
    </source>
</evidence>
<evidence type="ECO:0000255" key="2"/>
<evidence type="ECO:0000269" key="3">
    <source>
    </source>
</evidence>
<evidence type="ECO:0000269" key="4">
    <source>
    </source>
</evidence>
<evidence type="ECO:0000303" key="5">
    <source>
    </source>
</evidence>
<evidence type="ECO:0000305" key="6"/>
<evidence type="ECO:0000305" key="7">
    <source>
    </source>
</evidence>
<evidence type="ECO:0000305" key="8">
    <source>
    </source>
</evidence>
<protein>
    <recommendedName>
        <fullName evidence="6">U-myrmeciitoxin(01)-Mg7b</fullName>
        <shortName evidence="5">MIITX(01)-Mg7b</shortName>
        <shortName evidence="6">U-MIITX(01)-Mg7b</shortName>
    </recommendedName>
</protein>
<feature type="signal peptide" evidence="2">
    <location>
        <begin position="1"/>
        <end position="17"/>
    </location>
</feature>
<feature type="propeptide" id="PRO_0000447092" evidence="7">
    <location>
        <begin position="18"/>
        <end position="50"/>
    </location>
</feature>
<feature type="chain" id="PRO_0000447093" description="U-myrmeciitoxin(01)-Mg7b" evidence="3">
    <location>
        <begin position="51"/>
        <end position="100"/>
    </location>
</feature>
<feature type="glycosylation site" description="O-linked (GalNAc...) serine" evidence="1 8">
    <location>
        <position position="85"/>
    </location>
</feature>
<feature type="glycosylation site" description="O-linked (GalNAc...) threonine" evidence="1 8">
    <location>
        <position position="94"/>
    </location>
</feature>
<feature type="glycosylation site" description="O-linked (GalNAc...) threonine" evidence="1 8">
    <location>
        <position position="95"/>
    </location>
</feature>
<proteinExistence type="evidence at protein level"/>
<keyword id="KW-0325">Glycoprotein</keyword>
<keyword id="KW-0472">Membrane</keyword>
<keyword id="KW-0528">Neurotoxin</keyword>
<keyword id="KW-0964">Secreted</keyword>
<keyword id="KW-0732">Signal</keyword>
<keyword id="KW-1052">Target cell membrane</keyword>
<keyword id="KW-1053">Target membrane</keyword>
<keyword id="KW-0800">Toxin</keyword>
<accession>P0DPX0</accession>
<reference key="1">
    <citation type="journal article" date="2018" name="Sci. Adv.">
        <title>A comprehensive portrait of the venom of the giant red bull ant, Myrmecia gulosa, reveals a hyperdiverse hymenopteran toxin gene family.</title>
        <authorList>
            <person name="Robinson S.D."/>
            <person name="Mueller A."/>
            <person name="Clayton D."/>
            <person name="Starobova H."/>
            <person name="Hamilton B.R."/>
            <person name="Payne R.J."/>
            <person name="Vetter I."/>
            <person name="King G.F."/>
            <person name="Undheim E.A.B."/>
        </authorList>
    </citation>
    <scope>NUCLEOTIDE SEQUENCE [MRNA]</scope>
    <scope>MASS SPECTROMETRY</scope>
    <scope>SUBCELLULAR LOCATION</scope>
    <scope>GLYCOSYLATION</scope>
    <source>
        <tissue>Venom</tissue>
        <tissue>Venom gland</tissue>
    </source>
</reference>
<reference key="2">
    <citation type="journal article" date="2021" name="IScience">
        <title>A pain-causing and paralytic ant venom glycopeptide.</title>
        <authorList>
            <person name="Robinson S.D."/>
            <person name="Kambanis L."/>
            <person name="Clayton D."/>
            <person name="Hinneburg H."/>
            <person name="Corcilius L."/>
            <person name="Mueller A."/>
            <person name="Walker A.A."/>
            <person name="Keramidas A."/>
            <person name="Kulkarni S.S."/>
            <person name="Jones A."/>
            <person name="Vetter I."/>
            <person name="Thaysen-Andersen M."/>
            <person name="Payne R.J."/>
            <person name="King G.F."/>
            <person name="Undheim E.A.B."/>
        </authorList>
    </citation>
    <scope>IDENTIFICATION BY MASS SPECTROMETRY</scope>
    <scope>GLYCOSYLATION</scope>
    <source>
        <tissue>Venom</tissue>
    </source>
</reference>